<comment type="function">
    <text evidence="1">Catalyzes the synthesis of beta-nicotinate D-ribonucleotide from nicotinate and 5-phospho-D-ribose 1-phosphate at the expense of ATP.</text>
</comment>
<comment type="catalytic activity">
    <reaction evidence="1">
        <text>nicotinate + 5-phospho-alpha-D-ribose 1-diphosphate + ATP + H2O = nicotinate beta-D-ribonucleotide + ADP + phosphate + diphosphate</text>
        <dbReference type="Rhea" id="RHEA:36163"/>
        <dbReference type="ChEBI" id="CHEBI:15377"/>
        <dbReference type="ChEBI" id="CHEBI:30616"/>
        <dbReference type="ChEBI" id="CHEBI:32544"/>
        <dbReference type="ChEBI" id="CHEBI:33019"/>
        <dbReference type="ChEBI" id="CHEBI:43474"/>
        <dbReference type="ChEBI" id="CHEBI:57502"/>
        <dbReference type="ChEBI" id="CHEBI:58017"/>
        <dbReference type="ChEBI" id="CHEBI:456216"/>
        <dbReference type="EC" id="6.3.4.21"/>
    </reaction>
</comment>
<comment type="pathway">
    <text evidence="1">Cofactor biosynthesis; NAD(+) biosynthesis; nicotinate D-ribonucleotide from nicotinate: step 1/1.</text>
</comment>
<comment type="PTM">
    <text evidence="1">Transiently phosphorylated on a His residue during the reaction cycle. Phosphorylation strongly increases the affinity for substrates and increases the rate of nicotinate D-ribonucleotide production. Dephosphorylation regenerates the low-affinity form of the enzyme, leading to product release.</text>
</comment>
<comment type="similarity">
    <text evidence="1">Belongs to the NAPRTase family.</text>
</comment>
<protein>
    <recommendedName>
        <fullName evidence="1">Nicotinate phosphoribosyltransferase</fullName>
        <shortName evidence="1">NAPRTase</shortName>
        <ecNumber evidence="1">6.3.4.21</ecNumber>
    </recommendedName>
</protein>
<keyword id="KW-0436">Ligase</keyword>
<keyword id="KW-0597">Phosphoprotein</keyword>
<keyword id="KW-0662">Pyridine nucleotide biosynthesis</keyword>
<name>PNCB_SODGM</name>
<evidence type="ECO:0000255" key="1">
    <source>
        <dbReference type="HAMAP-Rule" id="MF_00570"/>
    </source>
</evidence>
<organism>
    <name type="scientific">Sodalis glossinidius (strain morsitans)</name>
    <dbReference type="NCBI Taxonomy" id="343509"/>
    <lineage>
        <taxon>Bacteria</taxon>
        <taxon>Pseudomonadati</taxon>
        <taxon>Pseudomonadota</taxon>
        <taxon>Gammaproteobacteria</taxon>
        <taxon>Enterobacterales</taxon>
        <taxon>Bruguierivoracaceae</taxon>
        <taxon>Sodalis</taxon>
    </lineage>
</organism>
<proteinExistence type="inferred from homology"/>
<reference key="1">
    <citation type="journal article" date="2006" name="Genome Res.">
        <title>Massive genome erosion and functional adaptations provide insights into the symbiotic lifestyle of Sodalis glossinidius in the tsetse host.</title>
        <authorList>
            <person name="Toh H."/>
            <person name="Weiss B.L."/>
            <person name="Perkin S.A.H."/>
            <person name="Yamashita A."/>
            <person name="Oshima K."/>
            <person name="Hattori M."/>
            <person name="Aksoy S."/>
        </authorList>
    </citation>
    <scope>NUCLEOTIDE SEQUENCE [LARGE SCALE GENOMIC DNA]</scope>
    <source>
        <strain>morsitans</strain>
    </source>
</reference>
<gene>
    <name evidence="1" type="primary">pncB</name>
    <name type="ordered locus">SG1016</name>
</gene>
<sequence>MNVATDPILTSILDTDAYKFHMQQAVFHRYHDVMVSAKFRCRGYELLGEYAADISAQVDMMRGLQLNDDEFTYLRGLPFFQSDYLNCLRQFRFDPSQVRIRNHHGKLDIRITGPWRDVILWEVPLLAVISEVVHHRRSPQVTTADAVARLRQKLLHFRRISEDLDTSRFRLMDFGTRRRFSRQVQFEVIAELQREFPYLIGTSNYQLARERGLPPIGTQAHEWFQAHQQISPDLANSQSAALQAWLDEYPDRLGIALTDCITMDAFLRDFGPSFARAYQGMRHDSGDPVEWGEKAIAHYQQLGIDPLTKTLVFSDSLDFDKAFMLYRHFWQRINLVFGIGTRLTCDIPGIKPLNIVIKLVKCNGKPVAKLSDSPGKIMCHDKAFVRALRKAFDVPLVVKKAS</sequence>
<feature type="chain" id="PRO_1000025016" description="Nicotinate phosphoribosyltransferase">
    <location>
        <begin position="1"/>
        <end position="402"/>
    </location>
</feature>
<feature type="modified residue" description="Phosphohistidine; by autocatalysis" evidence="1">
    <location>
        <position position="221"/>
    </location>
</feature>
<dbReference type="EC" id="6.3.4.21" evidence="1"/>
<dbReference type="EMBL" id="AP008232">
    <property type="protein sequence ID" value="BAE74291.1"/>
    <property type="molecule type" value="Genomic_DNA"/>
</dbReference>
<dbReference type="SMR" id="Q2NU84"/>
<dbReference type="STRING" id="343509.SG1016"/>
<dbReference type="KEGG" id="sgl:SG1016"/>
<dbReference type="eggNOG" id="COG1488">
    <property type="taxonomic scope" value="Bacteria"/>
</dbReference>
<dbReference type="HOGENOM" id="CLU_030991_1_0_6"/>
<dbReference type="UniPathway" id="UPA00253">
    <property type="reaction ID" value="UER00457"/>
</dbReference>
<dbReference type="Proteomes" id="UP000001932">
    <property type="component" value="Chromosome"/>
</dbReference>
<dbReference type="GO" id="GO:0005829">
    <property type="term" value="C:cytosol"/>
    <property type="evidence" value="ECO:0007669"/>
    <property type="project" value="TreeGrafter"/>
</dbReference>
<dbReference type="GO" id="GO:0004516">
    <property type="term" value="F:nicotinate phosphoribosyltransferase activity"/>
    <property type="evidence" value="ECO:0007669"/>
    <property type="project" value="UniProtKB-UniRule"/>
</dbReference>
<dbReference type="GO" id="GO:0034355">
    <property type="term" value="P:NAD biosynthetic process via the salvage pathway"/>
    <property type="evidence" value="ECO:0007669"/>
    <property type="project" value="TreeGrafter"/>
</dbReference>
<dbReference type="CDD" id="cd01401">
    <property type="entry name" value="PncB_like"/>
    <property type="match status" value="1"/>
</dbReference>
<dbReference type="FunFam" id="3.20.140.10:FF:000001">
    <property type="entry name" value="Nicotinate phosphoribosyltransferase"/>
    <property type="match status" value="1"/>
</dbReference>
<dbReference type="Gene3D" id="3.20.140.10">
    <property type="entry name" value="nicotinate phosphoribosyltransferase"/>
    <property type="match status" value="1"/>
</dbReference>
<dbReference type="HAMAP" id="MF_00570">
    <property type="entry name" value="NAPRTase"/>
    <property type="match status" value="1"/>
</dbReference>
<dbReference type="InterPro" id="IPR041525">
    <property type="entry name" value="N/Namide_PRibTrfase"/>
</dbReference>
<dbReference type="InterPro" id="IPR040727">
    <property type="entry name" value="NAPRTase_N"/>
</dbReference>
<dbReference type="InterPro" id="IPR006406">
    <property type="entry name" value="Nic_PRibTrfase"/>
</dbReference>
<dbReference type="InterPro" id="IPR007229">
    <property type="entry name" value="Nic_PRibTrfase-Fam"/>
</dbReference>
<dbReference type="InterPro" id="IPR036068">
    <property type="entry name" value="Nicotinate_pribotase-like_C"/>
</dbReference>
<dbReference type="NCBIfam" id="TIGR01514">
    <property type="entry name" value="NAPRTase"/>
    <property type="match status" value="1"/>
</dbReference>
<dbReference type="NCBIfam" id="NF003704">
    <property type="entry name" value="PRK05321.1"/>
    <property type="match status" value="1"/>
</dbReference>
<dbReference type="PANTHER" id="PTHR11098">
    <property type="entry name" value="NICOTINATE PHOSPHORIBOSYLTRANSFERASE"/>
    <property type="match status" value="1"/>
</dbReference>
<dbReference type="PANTHER" id="PTHR11098:SF1">
    <property type="entry name" value="NICOTINATE PHOSPHORIBOSYLTRANSFERASE"/>
    <property type="match status" value="1"/>
</dbReference>
<dbReference type="Pfam" id="PF04095">
    <property type="entry name" value="NAPRTase"/>
    <property type="match status" value="1"/>
</dbReference>
<dbReference type="Pfam" id="PF17767">
    <property type="entry name" value="NAPRTase_N"/>
    <property type="match status" value="1"/>
</dbReference>
<dbReference type="PIRSF" id="PIRSF000484">
    <property type="entry name" value="NAPRT"/>
    <property type="match status" value="1"/>
</dbReference>
<dbReference type="SUPFAM" id="SSF51690">
    <property type="entry name" value="Nicotinate/Quinolinate PRTase C-terminal domain-like"/>
    <property type="match status" value="1"/>
</dbReference>
<dbReference type="SUPFAM" id="SSF54675">
    <property type="entry name" value="Nicotinate/Quinolinate PRTase N-terminal domain-like"/>
    <property type="match status" value="1"/>
</dbReference>
<accession>Q2NU84</accession>